<organism>
    <name type="scientific">Geobacter sulfurreducens (strain ATCC 51573 / DSM 12127 / PCA)</name>
    <dbReference type="NCBI Taxonomy" id="243231"/>
    <lineage>
        <taxon>Bacteria</taxon>
        <taxon>Pseudomonadati</taxon>
        <taxon>Thermodesulfobacteriota</taxon>
        <taxon>Desulfuromonadia</taxon>
        <taxon>Geobacterales</taxon>
        <taxon>Geobacteraceae</taxon>
        <taxon>Geobacter</taxon>
    </lineage>
</organism>
<accession>Q74E54</accession>
<proteinExistence type="inferred from homology"/>
<sequence>MERTFAIIKPDAVERNIIGKILEKVETAGFRIVGMKKILLSKCEAEGFYYVHKERPFFNDLCSFMSRSPVVVMVLERENAINTWREVMGATNPANAEAGTIRKDFGLSIEENSVHGSDSPESAAYEIPYFFSQLELL</sequence>
<gene>
    <name evidence="1" type="primary">ndk</name>
    <name type="ordered locus">GSU1110</name>
</gene>
<feature type="chain" id="PRO_0000136986" description="Nucleoside diphosphate kinase">
    <location>
        <begin position="1"/>
        <end position="137"/>
    </location>
</feature>
<feature type="active site" description="Pros-phosphohistidine intermediate" evidence="1">
    <location>
        <position position="115"/>
    </location>
</feature>
<feature type="binding site" evidence="1">
    <location>
        <position position="9"/>
    </location>
    <ligand>
        <name>ATP</name>
        <dbReference type="ChEBI" id="CHEBI:30616"/>
    </ligand>
</feature>
<feature type="binding site" evidence="1">
    <location>
        <position position="57"/>
    </location>
    <ligand>
        <name>ATP</name>
        <dbReference type="ChEBI" id="CHEBI:30616"/>
    </ligand>
</feature>
<feature type="binding site" evidence="1">
    <location>
        <position position="85"/>
    </location>
    <ligand>
        <name>ATP</name>
        <dbReference type="ChEBI" id="CHEBI:30616"/>
    </ligand>
</feature>
<feature type="binding site" evidence="1">
    <location>
        <position position="91"/>
    </location>
    <ligand>
        <name>ATP</name>
        <dbReference type="ChEBI" id="CHEBI:30616"/>
    </ligand>
</feature>
<feature type="binding site" evidence="1">
    <location>
        <position position="102"/>
    </location>
    <ligand>
        <name>ATP</name>
        <dbReference type="ChEBI" id="CHEBI:30616"/>
    </ligand>
</feature>
<feature type="binding site" evidence="1">
    <location>
        <position position="112"/>
    </location>
    <ligand>
        <name>ATP</name>
        <dbReference type="ChEBI" id="CHEBI:30616"/>
    </ligand>
</feature>
<evidence type="ECO:0000255" key="1">
    <source>
        <dbReference type="HAMAP-Rule" id="MF_00451"/>
    </source>
</evidence>
<keyword id="KW-0067">ATP-binding</keyword>
<keyword id="KW-0963">Cytoplasm</keyword>
<keyword id="KW-0418">Kinase</keyword>
<keyword id="KW-0460">Magnesium</keyword>
<keyword id="KW-0479">Metal-binding</keyword>
<keyword id="KW-0546">Nucleotide metabolism</keyword>
<keyword id="KW-0547">Nucleotide-binding</keyword>
<keyword id="KW-0597">Phosphoprotein</keyword>
<keyword id="KW-1185">Reference proteome</keyword>
<keyword id="KW-0808">Transferase</keyword>
<dbReference type="EC" id="2.7.4.6" evidence="1"/>
<dbReference type="EMBL" id="AE017180">
    <property type="protein sequence ID" value="AAR34436.1"/>
    <property type="molecule type" value="Genomic_DNA"/>
</dbReference>
<dbReference type="RefSeq" id="NP_952163.1">
    <property type="nucleotide sequence ID" value="NC_002939.5"/>
</dbReference>
<dbReference type="RefSeq" id="WP_010941771.1">
    <property type="nucleotide sequence ID" value="NC_002939.5"/>
</dbReference>
<dbReference type="SMR" id="Q74E54"/>
<dbReference type="FunCoup" id="Q74E54">
    <property type="interactions" value="516"/>
</dbReference>
<dbReference type="STRING" id="243231.GSU1110"/>
<dbReference type="EnsemblBacteria" id="AAR34436">
    <property type="protein sequence ID" value="AAR34436"/>
    <property type="gene ID" value="GSU1110"/>
</dbReference>
<dbReference type="KEGG" id="gsu:GSU1110"/>
<dbReference type="PATRIC" id="fig|243231.5.peg.1106"/>
<dbReference type="eggNOG" id="COG0105">
    <property type="taxonomic scope" value="Bacteria"/>
</dbReference>
<dbReference type="HOGENOM" id="CLU_060216_8_1_7"/>
<dbReference type="InParanoid" id="Q74E54"/>
<dbReference type="OrthoDB" id="9801161at2"/>
<dbReference type="Proteomes" id="UP000000577">
    <property type="component" value="Chromosome"/>
</dbReference>
<dbReference type="GO" id="GO:0005737">
    <property type="term" value="C:cytoplasm"/>
    <property type="evidence" value="ECO:0007669"/>
    <property type="project" value="UniProtKB-SubCell"/>
</dbReference>
<dbReference type="GO" id="GO:0005524">
    <property type="term" value="F:ATP binding"/>
    <property type="evidence" value="ECO:0007669"/>
    <property type="project" value="UniProtKB-UniRule"/>
</dbReference>
<dbReference type="GO" id="GO:0046872">
    <property type="term" value="F:metal ion binding"/>
    <property type="evidence" value="ECO:0007669"/>
    <property type="project" value="UniProtKB-KW"/>
</dbReference>
<dbReference type="GO" id="GO:0004550">
    <property type="term" value="F:nucleoside diphosphate kinase activity"/>
    <property type="evidence" value="ECO:0007669"/>
    <property type="project" value="UniProtKB-UniRule"/>
</dbReference>
<dbReference type="GO" id="GO:0006241">
    <property type="term" value="P:CTP biosynthetic process"/>
    <property type="evidence" value="ECO:0007669"/>
    <property type="project" value="UniProtKB-UniRule"/>
</dbReference>
<dbReference type="GO" id="GO:0006183">
    <property type="term" value="P:GTP biosynthetic process"/>
    <property type="evidence" value="ECO:0007669"/>
    <property type="project" value="UniProtKB-UniRule"/>
</dbReference>
<dbReference type="GO" id="GO:0006163">
    <property type="term" value="P:purine nucleotide metabolic process"/>
    <property type="evidence" value="ECO:0000318"/>
    <property type="project" value="GO_Central"/>
</dbReference>
<dbReference type="GO" id="GO:0006220">
    <property type="term" value="P:pyrimidine nucleotide metabolic process"/>
    <property type="evidence" value="ECO:0000318"/>
    <property type="project" value="GO_Central"/>
</dbReference>
<dbReference type="GO" id="GO:0006228">
    <property type="term" value="P:UTP biosynthetic process"/>
    <property type="evidence" value="ECO:0007669"/>
    <property type="project" value="UniProtKB-UniRule"/>
</dbReference>
<dbReference type="CDD" id="cd04413">
    <property type="entry name" value="NDPk_I"/>
    <property type="match status" value="1"/>
</dbReference>
<dbReference type="FunFam" id="3.30.70.141:FF:000003">
    <property type="entry name" value="Nucleoside diphosphate kinase"/>
    <property type="match status" value="1"/>
</dbReference>
<dbReference type="Gene3D" id="3.30.70.141">
    <property type="entry name" value="Nucleoside diphosphate kinase-like domain"/>
    <property type="match status" value="1"/>
</dbReference>
<dbReference type="HAMAP" id="MF_00451">
    <property type="entry name" value="NDP_kinase"/>
    <property type="match status" value="1"/>
</dbReference>
<dbReference type="InterPro" id="IPR034907">
    <property type="entry name" value="NDK-like_dom"/>
</dbReference>
<dbReference type="InterPro" id="IPR036850">
    <property type="entry name" value="NDK-like_dom_sf"/>
</dbReference>
<dbReference type="InterPro" id="IPR001564">
    <property type="entry name" value="Nucleoside_diP_kinase"/>
</dbReference>
<dbReference type="InterPro" id="IPR023005">
    <property type="entry name" value="Nucleoside_diP_kinase_AS"/>
</dbReference>
<dbReference type="NCBIfam" id="NF001908">
    <property type="entry name" value="PRK00668.1"/>
    <property type="match status" value="1"/>
</dbReference>
<dbReference type="PANTHER" id="PTHR46161">
    <property type="entry name" value="NUCLEOSIDE DIPHOSPHATE KINASE"/>
    <property type="match status" value="1"/>
</dbReference>
<dbReference type="PANTHER" id="PTHR46161:SF3">
    <property type="entry name" value="NUCLEOSIDE DIPHOSPHATE KINASE DDB_G0292928-RELATED"/>
    <property type="match status" value="1"/>
</dbReference>
<dbReference type="Pfam" id="PF00334">
    <property type="entry name" value="NDK"/>
    <property type="match status" value="1"/>
</dbReference>
<dbReference type="PRINTS" id="PR01243">
    <property type="entry name" value="NUCDPKINASE"/>
</dbReference>
<dbReference type="SMART" id="SM00562">
    <property type="entry name" value="NDK"/>
    <property type="match status" value="1"/>
</dbReference>
<dbReference type="SUPFAM" id="SSF54919">
    <property type="entry name" value="Nucleoside diphosphate kinase, NDK"/>
    <property type="match status" value="1"/>
</dbReference>
<dbReference type="PROSITE" id="PS00469">
    <property type="entry name" value="NDPK"/>
    <property type="match status" value="1"/>
</dbReference>
<dbReference type="PROSITE" id="PS51374">
    <property type="entry name" value="NDPK_LIKE"/>
    <property type="match status" value="1"/>
</dbReference>
<comment type="function">
    <text evidence="1">Major role in the synthesis of nucleoside triphosphates other than ATP. The ATP gamma phosphate is transferred to the NDP beta phosphate via a ping-pong mechanism, using a phosphorylated active-site intermediate.</text>
</comment>
<comment type="catalytic activity">
    <reaction evidence="1">
        <text>a 2'-deoxyribonucleoside 5'-diphosphate + ATP = a 2'-deoxyribonucleoside 5'-triphosphate + ADP</text>
        <dbReference type="Rhea" id="RHEA:44640"/>
        <dbReference type="ChEBI" id="CHEBI:30616"/>
        <dbReference type="ChEBI" id="CHEBI:61560"/>
        <dbReference type="ChEBI" id="CHEBI:73316"/>
        <dbReference type="ChEBI" id="CHEBI:456216"/>
        <dbReference type="EC" id="2.7.4.6"/>
    </reaction>
</comment>
<comment type="catalytic activity">
    <reaction evidence="1">
        <text>a ribonucleoside 5'-diphosphate + ATP = a ribonucleoside 5'-triphosphate + ADP</text>
        <dbReference type="Rhea" id="RHEA:18113"/>
        <dbReference type="ChEBI" id="CHEBI:30616"/>
        <dbReference type="ChEBI" id="CHEBI:57930"/>
        <dbReference type="ChEBI" id="CHEBI:61557"/>
        <dbReference type="ChEBI" id="CHEBI:456216"/>
        <dbReference type="EC" id="2.7.4.6"/>
    </reaction>
</comment>
<comment type="cofactor">
    <cofactor evidence="1">
        <name>Mg(2+)</name>
        <dbReference type="ChEBI" id="CHEBI:18420"/>
    </cofactor>
</comment>
<comment type="subunit">
    <text evidence="1">Homotetramer.</text>
</comment>
<comment type="subcellular location">
    <subcellularLocation>
        <location evidence="1">Cytoplasm</location>
    </subcellularLocation>
</comment>
<comment type="similarity">
    <text evidence="1">Belongs to the NDK family.</text>
</comment>
<name>NDK_GEOSL</name>
<protein>
    <recommendedName>
        <fullName evidence="1">Nucleoside diphosphate kinase</fullName>
        <shortName evidence="1">NDK</shortName>
        <shortName evidence="1">NDP kinase</shortName>
        <ecNumber evidence="1">2.7.4.6</ecNumber>
    </recommendedName>
    <alternativeName>
        <fullName evidence="1">Nucleoside-2-P kinase</fullName>
    </alternativeName>
</protein>
<reference key="1">
    <citation type="journal article" date="2003" name="Science">
        <title>Genome of Geobacter sulfurreducens: metal reduction in subsurface environments.</title>
        <authorList>
            <person name="Methe B.A."/>
            <person name="Nelson K.E."/>
            <person name="Eisen J.A."/>
            <person name="Paulsen I.T."/>
            <person name="Nelson W.C."/>
            <person name="Heidelberg J.F."/>
            <person name="Wu D."/>
            <person name="Wu M."/>
            <person name="Ward N.L."/>
            <person name="Beanan M.J."/>
            <person name="Dodson R.J."/>
            <person name="Madupu R."/>
            <person name="Brinkac L.M."/>
            <person name="Daugherty S.C."/>
            <person name="DeBoy R.T."/>
            <person name="Durkin A.S."/>
            <person name="Gwinn M.L."/>
            <person name="Kolonay J.F."/>
            <person name="Sullivan S.A."/>
            <person name="Haft D.H."/>
            <person name="Selengut J."/>
            <person name="Davidsen T.M."/>
            <person name="Zafar N."/>
            <person name="White O."/>
            <person name="Tran B."/>
            <person name="Romero C."/>
            <person name="Forberger H.A."/>
            <person name="Weidman J.F."/>
            <person name="Khouri H.M."/>
            <person name="Feldblyum T.V."/>
            <person name="Utterback T.R."/>
            <person name="Van Aken S.E."/>
            <person name="Lovley D.R."/>
            <person name="Fraser C.M."/>
        </authorList>
    </citation>
    <scope>NUCLEOTIDE SEQUENCE [LARGE SCALE GENOMIC DNA]</scope>
    <source>
        <strain>ATCC 51573 / DSM 12127 / PCA</strain>
    </source>
</reference>